<keyword id="KW-0687">Ribonucleoprotein</keyword>
<keyword id="KW-0689">Ribosomal protein</keyword>
<keyword id="KW-0694">RNA-binding</keyword>
<keyword id="KW-0699">rRNA-binding</keyword>
<reference key="1">
    <citation type="journal article" date="2006" name="Science">
        <title>The 160-kilobase genome of the bacterial endosymbiont Carsonella.</title>
        <authorList>
            <person name="Nakabachi A."/>
            <person name="Yamashita A."/>
            <person name="Toh H."/>
            <person name="Ishikawa H."/>
            <person name="Dunbar H.E."/>
            <person name="Moran N.A."/>
            <person name="Hattori M."/>
        </authorList>
    </citation>
    <scope>NUCLEOTIDE SEQUENCE [LARGE SCALE GENOMIC DNA]</scope>
    <source>
        <strain>PV</strain>
    </source>
</reference>
<organism>
    <name type="scientific">Carsonella ruddii (strain PV)</name>
    <dbReference type="NCBI Taxonomy" id="387662"/>
    <lineage>
        <taxon>Bacteria</taxon>
        <taxon>Pseudomonadati</taxon>
        <taxon>Pseudomonadota</taxon>
        <taxon>Gammaproteobacteria</taxon>
        <taxon>Oceanospirillales</taxon>
        <taxon>Halomonadaceae</taxon>
        <taxon>Zymobacter group</taxon>
        <taxon>Candidatus Carsonella</taxon>
    </lineage>
</organism>
<comment type="function">
    <text evidence="1">Binds directly to 23S ribosomal RNA and is necessary for the in vitro assembly process of the 50S ribosomal subunit. It is not involved in the protein synthesizing functions of that subunit (By similarity).</text>
</comment>
<comment type="similarity">
    <text evidence="2">Belongs to the bacterial ribosomal protein bL20 family.</text>
</comment>
<feature type="chain" id="PRO_0000355465" description="Large ribosomal subunit protein bL20">
    <location>
        <begin position="1"/>
        <end position="101"/>
    </location>
</feature>
<evidence type="ECO:0000250" key="1"/>
<evidence type="ECO:0000305" key="2"/>
<accession>Q05FQ0</accession>
<gene>
    <name type="primary">rplT</name>
    <name type="ordered locus">CRP_090</name>
</gene>
<sequence length="101" mass="12218">MTRSKPNKNTKKYLKHNKGFYGRKKNCLKLAKQYYIKSLFKKYIDKKNKKRLILKKKIALINFFSRIYFGLSYSKFVYILKINNCKLNKNIILFLLLKTIV</sequence>
<name>RL20_CARRP</name>
<proteinExistence type="inferred from homology"/>
<protein>
    <recommendedName>
        <fullName evidence="2">Large ribosomal subunit protein bL20</fullName>
    </recommendedName>
    <alternativeName>
        <fullName>50S ribosomal protein L20</fullName>
    </alternativeName>
</protein>
<dbReference type="EMBL" id="AP009180">
    <property type="protein sequence ID" value="BAF35121.1"/>
    <property type="molecule type" value="Genomic_DNA"/>
</dbReference>
<dbReference type="RefSeq" id="WP_011672313.1">
    <property type="nucleotide sequence ID" value="NC_008512.1"/>
</dbReference>
<dbReference type="SMR" id="Q05FQ0"/>
<dbReference type="STRING" id="387662.CRP_090"/>
<dbReference type="KEGG" id="crp:CRP_090"/>
<dbReference type="HOGENOM" id="CLU_2286315_0_0_6"/>
<dbReference type="OrthoDB" id="6184243at2"/>
<dbReference type="Proteomes" id="UP000000777">
    <property type="component" value="Chromosome"/>
</dbReference>
<dbReference type="GO" id="GO:1990904">
    <property type="term" value="C:ribonucleoprotein complex"/>
    <property type="evidence" value="ECO:0007669"/>
    <property type="project" value="UniProtKB-KW"/>
</dbReference>
<dbReference type="GO" id="GO:0005840">
    <property type="term" value="C:ribosome"/>
    <property type="evidence" value="ECO:0007669"/>
    <property type="project" value="UniProtKB-KW"/>
</dbReference>
<dbReference type="GO" id="GO:0019843">
    <property type="term" value="F:rRNA binding"/>
    <property type="evidence" value="ECO:0007669"/>
    <property type="project" value="UniProtKB-KW"/>
</dbReference>
<dbReference type="GO" id="GO:0003735">
    <property type="term" value="F:structural constituent of ribosome"/>
    <property type="evidence" value="ECO:0007669"/>
    <property type="project" value="InterPro"/>
</dbReference>
<dbReference type="GO" id="GO:0006412">
    <property type="term" value="P:translation"/>
    <property type="evidence" value="ECO:0007669"/>
    <property type="project" value="InterPro"/>
</dbReference>
<dbReference type="Gene3D" id="6.10.160.10">
    <property type="match status" value="1"/>
</dbReference>
<dbReference type="InterPro" id="IPR005813">
    <property type="entry name" value="Ribosomal_bL20"/>
</dbReference>
<dbReference type="InterPro" id="IPR035566">
    <property type="entry name" value="Ribosomal_protein_bL20_C"/>
</dbReference>
<dbReference type="PANTHER" id="PTHR10986">
    <property type="entry name" value="39S RIBOSOMAL PROTEIN L20"/>
    <property type="match status" value="1"/>
</dbReference>
<dbReference type="Pfam" id="PF00453">
    <property type="entry name" value="Ribosomal_L20"/>
    <property type="match status" value="1"/>
</dbReference>
<dbReference type="PRINTS" id="PR00062">
    <property type="entry name" value="RIBOSOMALL20"/>
</dbReference>
<dbReference type="SUPFAM" id="SSF74731">
    <property type="entry name" value="Ribosomal protein L20"/>
    <property type="match status" value="1"/>
</dbReference>